<name>NADE_STRP1</name>
<organism>
    <name type="scientific">Streptococcus pyogenes serotype M1</name>
    <dbReference type="NCBI Taxonomy" id="301447"/>
    <lineage>
        <taxon>Bacteria</taxon>
        <taxon>Bacillati</taxon>
        <taxon>Bacillota</taxon>
        <taxon>Bacilli</taxon>
        <taxon>Lactobacillales</taxon>
        <taxon>Streptococcaceae</taxon>
        <taxon>Streptococcus</taxon>
    </lineage>
</organism>
<keyword id="KW-0067">ATP-binding</keyword>
<keyword id="KW-0436">Ligase</keyword>
<keyword id="KW-0460">Magnesium</keyword>
<keyword id="KW-0479">Metal-binding</keyword>
<keyword id="KW-0520">NAD</keyword>
<keyword id="KW-0547">Nucleotide-binding</keyword>
<keyword id="KW-1185">Reference proteome</keyword>
<reference key="1">
    <citation type="journal article" date="2001" name="Proc. Natl. Acad. Sci. U.S.A.">
        <title>Complete genome sequence of an M1 strain of Streptococcus pyogenes.</title>
        <authorList>
            <person name="Ferretti J.J."/>
            <person name="McShan W.M."/>
            <person name="Ajdic D.J."/>
            <person name="Savic D.J."/>
            <person name="Savic G."/>
            <person name="Lyon K."/>
            <person name="Primeaux C."/>
            <person name="Sezate S."/>
            <person name="Suvorov A.N."/>
            <person name="Kenton S."/>
            <person name="Lai H.S."/>
            <person name="Lin S.P."/>
            <person name="Qian Y."/>
            <person name="Jia H.G."/>
            <person name="Najar F.Z."/>
            <person name="Ren Q."/>
            <person name="Zhu H."/>
            <person name="Song L."/>
            <person name="White J."/>
            <person name="Yuan X."/>
            <person name="Clifton S.W."/>
            <person name="Roe B.A."/>
            <person name="McLaughlin R.E."/>
        </authorList>
    </citation>
    <scope>NUCLEOTIDE SEQUENCE [LARGE SCALE GENOMIC DNA]</scope>
    <source>
        <strain>ATCC 700294 / SF370 / Serotype M1</strain>
    </source>
</reference>
<reference key="2">
    <citation type="journal article" date="2005" name="J. Infect. Dis.">
        <title>Evolutionary origin and emergence of a highly successful clone of serotype M1 group A Streptococcus involved multiple horizontal gene transfer events.</title>
        <authorList>
            <person name="Sumby P."/>
            <person name="Porcella S.F."/>
            <person name="Madrigal A.G."/>
            <person name="Barbian K.D."/>
            <person name="Virtaneva K."/>
            <person name="Ricklefs S.M."/>
            <person name="Sturdevant D.E."/>
            <person name="Graham M.R."/>
            <person name="Vuopio-Varkila J."/>
            <person name="Hoe N.P."/>
            <person name="Musser J.M."/>
        </authorList>
    </citation>
    <scope>NUCLEOTIDE SEQUENCE [LARGE SCALE GENOMIC DNA]</scope>
    <source>
        <strain>ATCC BAA-947 / MGAS5005 / Serotype M1</strain>
    </source>
</reference>
<comment type="function">
    <text evidence="1">Catalyzes the ATP-dependent amidation of deamido-NAD to form NAD. Uses ammonia as a nitrogen source.</text>
</comment>
<comment type="catalytic activity">
    <reaction evidence="1">
        <text>deamido-NAD(+) + NH4(+) + ATP = AMP + diphosphate + NAD(+) + H(+)</text>
        <dbReference type="Rhea" id="RHEA:21188"/>
        <dbReference type="ChEBI" id="CHEBI:15378"/>
        <dbReference type="ChEBI" id="CHEBI:28938"/>
        <dbReference type="ChEBI" id="CHEBI:30616"/>
        <dbReference type="ChEBI" id="CHEBI:33019"/>
        <dbReference type="ChEBI" id="CHEBI:57540"/>
        <dbReference type="ChEBI" id="CHEBI:58437"/>
        <dbReference type="ChEBI" id="CHEBI:456215"/>
        <dbReference type="EC" id="6.3.1.5"/>
    </reaction>
</comment>
<comment type="pathway">
    <text evidence="1">Cofactor biosynthesis; NAD(+) biosynthesis; NAD(+) from deamido-NAD(+) (ammonia route): step 1/1.</text>
</comment>
<comment type="subunit">
    <text evidence="1">Homodimer.</text>
</comment>
<comment type="similarity">
    <text evidence="1">Belongs to the NAD synthetase family.</text>
</comment>
<gene>
    <name evidence="1" type="primary">nadE</name>
    <name type="ordered locus">SPy_1652</name>
    <name type="ordered locus">M5005_Spy1357</name>
</gene>
<evidence type="ECO:0000255" key="1">
    <source>
        <dbReference type="HAMAP-Rule" id="MF_00193"/>
    </source>
</evidence>
<dbReference type="EC" id="6.3.1.5" evidence="1"/>
<dbReference type="EMBL" id="AE004092">
    <property type="protein sequence ID" value="AAK34418.1"/>
    <property type="molecule type" value="Genomic_DNA"/>
</dbReference>
<dbReference type="EMBL" id="CP000017">
    <property type="protein sequence ID" value="AAZ51975.1"/>
    <property type="molecule type" value="Genomic_DNA"/>
</dbReference>
<dbReference type="RefSeq" id="NP_269697.1">
    <property type="nucleotide sequence ID" value="NC_002737.2"/>
</dbReference>
<dbReference type="SMR" id="Q99YK9"/>
<dbReference type="PaxDb" id="1314-HKU360_01408"/>
<dbReference type="KEGG" id="spy:SPy_1652"/>
<dbReference type="KEGG" id="spz:M5005_Spy1357"/>
<dbReference type="PATRIC" id="fig|160490.10.peg.1439"/>
<dbReference type="HOGENOM" id="CLU_059327_3_0_9"/>
<dbReference type="OMA" id="FCARLRM"/>
<dbReference type="UniPathway" id="UPA00253">
    <property type="reaction ID" value="UER00333"/>
</dbReference>
<dbReference type="Proteomes" id="UP000000750">
    <property type="component" value="Chromosome"/>
</dbReference>
<dbReference type="GO" id="GO:0005737">
    <property type="term" value="C:cytoplasm"/>
    <property type="evidence" value="ECO:0007669"/>
    <property type="project" value="InterPro"/>
</dbReference>
<dbReference type="GO" id="GO:0005524">
    <property type="term" value="F:ATP binding"/>
    <property type="evidence" value="ECO:0007669"/>
    <property type="project" value="UniProtKB-UniRule"/>
</dbReference>
<dbReference type="GO" id="GO:0004359">
    <property type="term" value="F:glutaminase activity"/>
    <property type="evidence" value="ECO:0007669"/>
    <property type="project" value="InterPro"/>
</dbReference>
<dbReference type="GO" id="GO:0046872">
    <property type="term" value="F:metal ion binding"/>
    <property type="evidence" value="ECO:0007669"/>
    <property type="project" value="UniProtKB-KW"/>
</dbReference>
<dbReference type="GO" id="GO:0003952">
    <property type="term" value="F:NAD+ synthase (glutamine-hydrolyzing) activity"/>
    <property type="evidence" value="ECO:0007669"/>
    <property type="project" value="InterPro"/>
</dbReference>
<dbReference type="GO" id="GO:0008795">
    <property type="term" value="F:NAD+ synthase activity"/>
    <property type="evidence" value="ECO:0007669"/>
    <property type="project" value="UniProtKB-UniRule"/>
</dbReference>
<dbReference type="GO" id="GO:0009435">
    <property type="term" value="P:NAD biosynthetic process"/>
    <property type="evidence" value="ECO:0007669"/>
    <property type="project" value="UniProtKB-UniRule"/>
</dbReference>
<dbReference type="CDD" id="cd00553">
    <property type="entry name" value="NAD_synthase"/>
    <property type="match status" value="1"/>
</dbReference>
<dbReference type="FunFam" id="3.40.50.620:FF:000015">
    <property type="entry name" value="NH(3)-dependent NAD(+) synthetase"/>
    <property type="match status" value="1"/>
</dbReference>
<dbReference type="Gene3D" id="3.40.50.620">
    <property type="entry name" value="HUPs"/>
    <property type="match status" value="1"/>
</dbReference>
<dbReference type="HAMAP" id="MF_00193">
    <property type="entry name" value="NadE_ammonia_dep"/>
    <property type="match status" value="1"/>
</dbReference>
<dbReference type="InterPro" id="IPR022310">
    <property type="entry name" value="NAD/GMP_synthase"/>
</dbReference>
<dbReference type="InterPro" id="IPR003694">
    <property type="entry name" value="NAD_synthase"/>
</dbReference>
<dbReference type="InterPro" id="IPR022926">
    <property type="entry name" value="NH(3)-dep_NAD(+)_synth"/>
</dbReference>
<dbReference type="InterPro" id="IPR014729">
    <property type="entry name" value="Rossmann-like_a/b/a_fold"/>
</dbReference>
<dbReference type="NCBIfam" id="TIGR00552">
    <property type="entry name" value="nadE"/>
    <property type="match status" value="1"/>
</dbReference>
<dbReference type="NCBIfam" id="NF001979">
    <property type="entry name" value="PRK00768.1"/>
    <property type="match status" value="1"/>
</dbReference>
<dbReference type="PANTHER" id="PTHR23090">
    <property type="entry name" value="NH 3 /GLUTAMINE-DEPENDENT NAD + SYNTHETASE"/>
    <property type="match status" value="1"/>
</dbReference>
<dbReference type="PANTHER" id="PTHR23090:SF7">
    <property type="entry name" value="NH(3)-DEPENDENT NAD(+) SYNTHETASE"/>
    <property type="match status" value="1"/>
</dbReference>
<dbReference type="Pfam" id="PF02540">
    <property type="entry name" value="NAD_synthase"/>
    <property type="match status" value="1"/>
</dbReference>
<dbReference type="SUPFAM" id="SSF52402">
    <property type="entry name" value="Adenine nucleotide alpha hydrolases-like"/>
    <property type="match status" value="1"/>
</dbReference>
<proteinExistence type="inferred from homology"/>
<protein>
    <recommendedName>
        <fullName evidence="1">NH(3)-dependent NAD(+) synthetase</fullName>
        <ecNumber evidence="1">6.3.1.5</ecNumber>
    </recommendedName>
</protein>
<feature type="chain" id="PRO_0000152208" description="NH(3)-dependent NAD(+) synthetase">
    <location>
        <begin position="1"/>
        <end position="274"/>
    </location>
</feature>
<feature type="binding site" evidence="1">
    <location>
        <begin position="46"/>
        <end position="53"/>
    </location>
    <ligand>
        <name>ATP</name>
        <dbReference type="ChEBI" id="CHEBI:30616"/>
    </ligand>
</feature>
<feature type="binding site" evidence="1">
    <location>
        <position position="52"/>
    </location>
    <ligand>
        <name>Mg(2+)</name>
        <dbReference type="ChEBI" id="CHEBI:18420"/>
    </ligand>
</feature>
<feature type="binding site" evidence="1">
    <location>
        <position position="140"/>
    </location>
    <ligand>
        <name>deamido-NAD(+)</name>
        <dbReference type="ChEBI" id="CHEBI:58437"/>
    </ligand>
</feature>
<feature type="binding site" evidence="1">
    <location>
        <position position="160"/>
    </location>
    <ligand>
        <name>ATP</name>
        <dbReference type="ChEBI" id="CHEBI:30616"/>
    </ligand>
</feature>
<feature type="binding site" evidence="1">
    <location>
        <position position="165"/>
    </location>
    <ligand>
        <name>Mg(2+)</name>
        <dbReference type="ChEBI" id="CHEBI:18420"/>
    </ligand>
</feature>
<feature type="binding site" evidence="1">
    <location>
        <position position="173"/>
    </location>
    <ligand>
        <name>deamido-NAD(+)</name>
        <dbReference type="ChEBI" id="CHEBI:58437"/>
    </ligand>
</feature>
<feature type="binding site" evidence="1">
    <location>
        <position position="180"/>
    </location>
    <ligand>
        <name>deamido-NAD(+)</name>
        <dbReference type="ChEBI" id="CHEBI:58437"/>
    </ligand>
</feature>
<feature type="binding site" evidence="1">
    <location>
        <position position="189"/>
    </location>
    <ligand>
        <name>ATP</name>
        <dbReference type="ChEBI" id="CHEBI:30616"/>
    </ligand>
</feature>
<feature type="binding site" evidence="1">
    <location>
        <position position="211"/>
    </location>
    <ligand>
        <name>ATP</name>
        <dbReference type="ChEBI" id="CHEBI:30616"/>
    </ligand>
</feature>
<feature type="binding site" evidence="1">
    <location>
        <begin position="260"/>
        <end position="261"/>
    </location>
    <ligand>
        <name>deamido-NAD(+)</name>
        <dbReference type="ChEBI" id="CHEBI:58437"/>
    </ligand>
</feature>
<sequence>MTLQEEIIRQLGVKASIDPQEEIRKAVDFLKAYLRKHSFLKTYVLGISGGQDSTLAGKLAQMAIAELREEASDQAYQFIAVRLPYGVQADEADAQKALAFIAPDQTLTINIKAAVDGQVEALQAAGVEISDFNKGNIKARQRMISQYAIAGQMAGAVIGTDHAAENITGFFTKFGDGGADILPLFRLNKRQGKALLKVLGADAALYEKVPTADLEDQKPGLADEVALGVTYQDIDDYLEGKLISKVAQATIEKWWHKGQHKRHLPITIFDDFWK</sequence>
<accession>Q99YK9</accession>
<accession>Q48XF0</accession>